<evidence type="ECO:0000255" key="1">
    <source>
        <dbReference type="HAMAP-Rule" id="MF_00219"/>
    </source>
</evidence>
<gene>
    <name evidence="1" type="primary">pyrC</name>
    <name type="ordered locus">HP_0581</name>
</gene>
<protein>
    <recommendedName>
        <fullName evidence="1">Dihydroorotase</fullName>
        <shortName evidence="1">DHOase</shortName>
        <ecNumber evidence="1">3.5.2.3</ecNumber>
    </recommendedName>
</protein>
<proteinExistence type="inferred from homology"/>
<organism>
    <name type="scientific">Helicobacter pylori (strain ATCC 700392 / 26695)</name>
    <name type="common">Campylobacter pylori</name>
    <dbReference type="NCBI Taxonomy" id="85962"/>
    <lineage>
        <taxon>Bacteria</taxon>
        <taxon>Pseudomonadati</taxon>
        <taxon>Campylobacterota</taxon>
        <taxon>Epsilonproteobacteria</taxon>
        <taxon>Campylobacterales</taxon>
        <taxon>Helicobacteraceae</taxon>
        <taxon>Helicobacter</taxon>
    </lineage>
</organism>
<feature type="chain" id="PRO_0000147208" description="Dihydroorotase">
    <location>
        <begin position="1"/>
        <end position="339"/>
    </location>
</feature>
<feature type="active site" evidence="1">
    <location>
        <position position="239"/>
    </location>
</feature>
<feature type="binding site" evidence="1">
    <location>
        <position position="12"/>
    </location>
    <ligand>
        <name>Zn(2+)</name>
        <dbReference type="ChEBI" id="CHEBI:29105"/>
        <label>1</label>
    </ligand>
</feature>
<feature type="binding site" evidence="1">
    <location>
        <begin position="14"/>
        <end position="16"/>
    </location>
    <ligand>
        <name>substrate</name>
    </ligand>
</feature>
<feature type="binding site" evidence="1">
    <location>
        <position position="14"/>
    </location>
    <ligand>
        <name>Zn(2+)</name>
        <dbReference type="ChEBI" id="CHEBI:29105"/>
        <label>1</label>
    </ligand>
</feature>
<feature type="binding site" evidence="1">
    <location>
        <position position="40"/>
    </location>
    <ligand>
        <name>substrate</name>
    </ligand>
</feature>
<feature type="binding site" description="via carbamate group" evidence="1">
    <location>
        <position position="94"/>
    </location>
    <ligand>
        <name>Zn(2+)</name>
        <dbReference type="ChEBI" id="CHEBI:29105"/>
        <label>1</label>
    </ligand>
</feature>
<feature type="binding site" description="via carbamate group" evidence="1">
    <location>
        <position position="94"/>
    </location>
    <ligand>
        <name>Zn(2+)</name>
        <dbReference type="ChEBI" id="CHEBI:29105"/>
        <label>2</label>
    </ligand>
</feature>
<feature type="binding site" evidence="1">
    <location>
        <position position="133"/>
    </location>
    <ligand>
        <name>substrate</name>
    </ligand>
</feature>
<feature type="binding site" evidence="1">
    <location>
        <position position="133"/>
    </location>
    <ligand>
        <name>Zn(2+)</name>
        <dbReference type="ChEBI" id="CHEBI:29105"/>
        <label>2</label>
    </ligand>
</feature>
<feature type="binding site" evidence="1">
    <location>
        <position position="167"/>
    </location>
    <ligand>
        <name>Zn(2+)</name>
        <dbReference type="ChEBI" id="CHEBI:29105"/>
        <label>2</label>
    </ligand>
</feature>
<feature type="binding site" evidence="1">
    <location>
        <position position="239"/>
    </location>
    <ligand>
        <name>Zn(2+)</name>
        <dbReference type="ChEBI" id="CHEBI:29105"/>
        <label>1</label>
    </ligand>
</feature>
<feature type="binding site" evidence="1">
    <location>
        <position position="243"/>
    </location>
    <ligand>
        <name>substrate</name>
    </ligand>
</feature>
<feature type="binding site" evidence="1">
    <location>
        <position position="255"/>
    </location>
    <ligand>
        <name>substrate</name>
    </ligand>
</feature>
<feature type="modified residue" description="N6-carboxylysine" evidence="1">
    <location>
        <position position="94"/>
    </location>
</feature>
<dbReference type="EC" id="3.5.2.3" evidence="1"/>
<dbReference type="EMBL" id="AE000511">
    <property type="protein sequence ID" value="AAD07635.1"/>
    <property type="molecule type" value="Genomic_DNA"/>
</dbReference>
<dbReference type="PIR" id="E64592">
    <property type="entry name" value="E64592"/>
</dbReference>
<dbReference type="RefSeq" id="NP_207376.1">
    <property type="nucleotide sequence ID" value="NC_000915.1"/>
</dbReference>
<dbReference type="RefSeq" id="WP_000406682.1">
    <property type="nucleotide sequence ID" value="NC_018939.1"/>
</dbReference>
<dbReference type="SMR" id="P56465"/>
<dbReference type="FunCoup" id="P56465">
    <property type="interactions" value="283"/>
</dbReference>
<dbReference type="STRING" id="85962.HP_0581"/>
<dbReference type="PaxDb" id="85962-C694_02995"/>
<dbReference type="EnsemblBacteria" id="AAD07635">
    <property type="protein sequence ID" value="AAD07635"/>
    <property type="gene ID" value="HP_0581"/>
</dbReference>
<dbReference type="KEGG" id="heo:C694_02995"/>
<dbReference type="KEGG" id="hpy:HP_0581"/>
<dbReference type="PATRIC" id="fig|85962.47.peg.626"/>
<dbReference type="eggNOG" id="COG0418">
    <property type="taxonomic scope" value="Bacteria"/>
</dbReference>
<dbReference type="InParanoid" id="P56465"/>
<dbReference type="OrthoDB" id="9808095at2"/>
<dbReference type="PhylomeDB" id="P56465"/>
<dbReference type="BRENDA" id="3.5.2.3">
    <property type="organism ID" value="2604"/>
</dbReference>
<dbReference type="UniPathway" id="UPA00070">
    <property type="reaction ID" value="UER00117"/>
</dbReference>
<dbReference type="Proteomes" id="UP000000429">
    <property type="component" value="Chromosome"/>
</dbReference>
<dbReference type="GO" id="GO:0005737">
    <property type="term" value="C:cytoplasm"/>
    <property type="evidence" value="ECO:0000318"/>
    <property type="project" value="GO_Central"/>
</dbReference>
<dbReference type="GO" id="GO:0005829">
    <property type="term" value="C:cytosol"/>
    <property type="evidence" value="ECO:0000318"/>
    <property type="project" value="GO_Central"/>
</dbReference>
<dbReference type="GO" id="GO:0004151">
    <property type="term" value="F:dihydroorotase activity"/>
    <property type="evidence" value="ECO:0000318"/>
    <property type="project" value="GO_Central"/>
</dbReference>
<dbReference type="GO" id="GO:0008270">
    <property type="term" value="F:zinc ion binding"/>
    <property type="evidence" value="ECO:0007669"/>
    <property type="project" value="UniProtKB-UniRule"/>
</dbReference>
<dbReference type="GO" id="GO:0006207">
    <property type="term" value="P:'de novo' pyrimidine nucleobase biosynthetic process"/>
    <property type="evidence" value="ECO:0000318"/>
    <property type="project" value="GO_Central"/>
</dbReference>
<dbReference type="GO" id="GO:0044205">
    <property type="term" value="P:'de novo' UMP biosynthetic process"/>
    <property type="evidence" value="ECO:0007669"/>
    <property type="project" value="UniProtKB-UniRule"/>
</dbReference>
<dbReference type="GO" id="GO:0006221">
    <property type="term" value="P:pyrimidine nucleotide biosynthetic process"/>
    <property type="evidence" value="ECO:0000318"/>
    <property type="project" value="GO_Central"/>
</dbReference>
<dbReference type="CDD" id="cd01294">
    <property type="entry name" value="DHOase"/>
    <property type="match status" value="1"/>
</dbReference>
<dbReference type="FunFam" id="3.20.20.140:FF:000110">
    <property type="entry name" value="Dihydroorotase"/>
    <property type="match status" value="1"/>
</dbReference>
<dbReference type="Gene3D" id="3.20.20.140">
    <property type="entry name" value="Metal-dependent hydrolases"/>
    <property type="match status" value="1"/>
</dbReference>
<dbReference type="HAMAP" id="MF_00219">
    <property type="entry name" value="PyrC_classII"/>
    <property type="match status" value="1"/>
</dbReference>
<dbReference type="InterPro" id="IPR004721">
    <property type="entry name" value="DHOdimr"/>
</dbReference>
<dbReference type="InterPro" id="IPR002195">
    <property type="entry name" value="Dihydroorotase_CS"/>
</dbReference>
<dbReference type="InterPro" id="IPR032466">
    <property type="entry name" value="Metal_Hydrolase"/>
</dbReference>
<dbReference type="NCBIfam" id="TIGR00856">
    <property type="entry name" value="pyrC_dimer"/>
    <property type="match status" value="1"/>
</dbReference>
<dbReference type="PANTHER" id="PTHR43137">
    <property type="entry name" value="DIHYDROOROTASE"/>
    <property type="match status" value="1"/>
</dbReference>
<dbReference type="PANTHER" id="PTHR43137:SF1">
    <property type="entry name" value="DIHYDROOROTASE"/>
    <property type="match status" value="1"/>
</dbReference>
<dbReference type="PIRSF" id="PIRSF001237">
    <property type="entry name" value="DHOdimr"/>
    <property type="match status" value="1"/>
</dbReference>
<dbReference type="SUPFAM" id="SSF51556">
    <property type="entry name" value="Metallo-dependent hydrolases"/>
    <property type="match status" value="1"/>
</dbReference>
<dbReference type="PROSITE" id="PS00482">
    <property type="entry name" value="DIHYDROOROTASE_1"/>
    <property type="match status" value="1"/>
</dbReference>
<dbReference type="PROSITE" id="PS00483">
    <property type="entry name" value="DIHYDROOROTASE_2"/>
    <property type="match status" value="1"/>
</dbReference>
<sequence>MEITLFDPIDAHLHVRENALLKAVLGYSSEPFSAAVIMPNLSKPLIDTPTTLEYEEEILNHSSNFKPLMSLYFNDGLTLEELQCAKEKGVRFLKLYPKGMTTNAQNGTSDLLGEKTLEVLENAQKLGFILCIHAEQTGFCLDKEFLCHSVLETFALSFPKLKIIIEHLSDWRSIALIEKHDNLYATLTLHHISMTLDDLLGGSLNPHCFCKPLIKTKKDQERLLSLALKAHPKISFGSDSAPHFISKKHSANIPAGIFSAPILLPALCELFEKHNALENLQAFISDNAKTIYGLENLPSKKARLSKKPFMIPTHTLCLNEKIAILRGGETLSWNLQEIA</sequence>
<name>PYRC_HELPY</name>
<keyword id="KW-0378">Hydrolase</keyword>
<keyword id="KW-0479">Metal-binding</keyword>
<keyword id="KW-0665">Pyrimidine biosynthesis</keyword>
<keyword id="KW-1185">Reference proteome</keyword>
<keyword id="KW-0862">Zinc</keyword>
<comment type="function">
    <text evidence="1">Catalyzes the reversible cyclization of carbamoyl aspartate to dihydroorotate.</text>
</comment>
<comment type="catalytic activity">
    <reaction evidence="1">
        <text>(S)-dihydroorotate + H2O = N-carbamoyl-L-aspartate + H(+)</text>
        <dbReference type="Rhea" id="RHEA:24296"/>
        <dbReference type="ChEBI" id="CHEBI:15377"/>
        <dbReference type="ChEBI" id="CHEBI:15378"/>
        <dbReference type="ChEBI" id="CHEBI:30864"/>
        <dbReference type="ChEBI" id="CHEBI:32814"/>
        <dbReference type="EC" id="3.5.2.3"/>
    </reaction>
</comment>
<comment type="cofactor">
    <cofactor evidence="1">
        <name>Zn(2+)</name>
        <dbReference type="ChEBI" id="CHEBI:29105"/>
    </cofactor>
    <text evidence="1">Binds 2 Zn(2+) ions per subunit.</text>
</comment>
<comment type="pathway">
    <text evidence="1">Pyrimidine metabolism; UMP biosynthesis via de novo pathway; (S)-dihydroorotate from bicarbonate: step 3/3.</text>
</comment>
<comment type="subunit">
    <text evidence="1">Homodimer.</text>
</comment>
<comment type="similarity">
    <text evidence="1">Belongs to the metallo-dependent hydrolases superfamily. DHOase family. Class II DHOase subfamily.</text>
</comment>
<reference key="1">
    <citation type="journal article" date="1997" name="Nature">
        <title>The complete genome sequence of the gastric pathogen Helicobacter pylori.</title>
        <authorList>
            <person name="Tomb J.-F."/>
            <person name="White O."/>
            <person name="Kerlavage A.R."/>
            <person name="Clayton R.A."/>
            <person name="Sutton G.G."/>
            <person name="Fleischmann R.D."/>
            <person name="Ketchum K.A."/>
            <person name="Klenk H.-P."/>
            <person name="Gill S.R."/>
            <person name="Dougherty B.A."/>
            <person name="Nelson K.E."/>
            <person name="Quackenbush J."/>
            <person name="Zhou L."/>
            <person name="Kirkness E.F."/>
            <person name="Peterson S.N."/>
            <person name="Loftus B.J."/>
            <person name="Richardson D.L."/>
            <person name="Dodson R.J."/>
            <person name="Khalak H.G."/>
            <person name="Glodek A."/>
            <person name="McKenney K."/>
            <person name="FitzGerald L.M."/>
            <person name="Lee N."/>
            <person name="Adams M.D."/>
            <person name="Hickey E.K."/>
            <person name="Berg D.E."/>
            <person name="Gocayne J.D."/>
            <person name="Utterback T.R."/>
            <person name="Peterson J.D."/>
            <person name="Kelley J.M."/>
            <person name="Cotton M.D."/>
            <person name="Weidman J.F."/>
            <person name="Fujii C."/>
            <person name="Bowman C."/>
            <person name="Watthey L."/>
            <person name="Wallin E."/>
            <person name="Hayes W.S."/>
            <person name="Borodovsky M."/>
            <person name="Karp P.D."/>
            <person name="Smith H.O."/>
            <person name="Fraser C.M."/>
            <person name="Venter J.C."/>
        </authorList>
    </citation>
    <scope>NUCLEOTIDE SEQUENCE [LARGE SCALE GENOMIC DNA]</scope>
    <source>
        <strain>ATCC 700392 / 26695</strain>
    </source>
</reference>
<accession>P56465</accession>